<organism>
    <name type="scientific">Corynebacterium jeikeium (strain K411)</name>
    <dbReference type="NCBI Taxonomy" id="306537"/>
    <lineage>
        <taxon>Bacteria</taxon>
        <taxon>Bacillati</taxon>
        <taxon>Actinomycetota</taxon>
        <taxon>Actinomycetes</taxon>
        <taxon>Mycobacteriales</taxon>
        <taxon>Corynebacteriaceae</taxon>
        <taxon>Corynebacterium</taxon>
    </lineage>
</organism>
<accession>Q4JW09</accession>
<dbReference type="EMBL" id="CR931997">
    <property type="protein sequence ID" value="CAI36998.1"/>
    <property type="molecule type" value="Genomic_DNA"/>
</dbReference>
<dbReference type="RefSeq" id="WP_011273437.1">
    <property type="nucleotide sequence ID" value="NC_007164.1"/>
</dbReference>
<dbReference type="SMR" id="Q4JW09"/>
<dbReference type="STRING" id="306537.jk0836"/>
<dbReference type="GeneID" id="92738360"/>
<dbReference type="KEGG" id="cjk:jk0836"/>
<dbReference type="PATRIC" id="fig|306537.10.peg.847"/>
<dbReference type="eggNOG" id="COG0292">
    <property type="taxonomic scope" value="Bacteria"/>
</dbReference>
<dbReference type="HOGENOM" id="CLU_123265_0_0_11"/>
<dbReference type="OrthoDB" id="9808966at2"/>
<dbReference type="Proteomes" id="UP000000545">
    <property type="component" value="Chromosome"/>
</dbReference>
<dbReference type="GO" id="GO:1990904">
    <property type="term" value="C:ribonucleoprotein complex"/>
    <property type="evidence" value="ECO:0007669"/>
    <property type="project" value="UniProtKB-KW"/>
</dbReference>
<dbReference type="GO" id="GO:0005840">
    <property type="term" value="C:ribosome"/>
    <property type="evidence" value="ECO:0007669"/>
    <property type="project" value="UniProtKB-KW"/>
</dbReference>
<dbReference type="GO" id="GO:0019843">
    <property type="term" value="F:rRNA binding"/>
    <property type="evidence" value="ECO:0007669"/>
    <property type="project" value="UniProtKB-UniRule"/>
</dbReference>
<dbReference type="GO" id="GO:0003735">
    <property type="term" value="F:structural constituent of ribosome"/>
    <property type="evidence" value="ECO:0007669"/>
    <property type="project" value="InterPro"/>
</dbReference>
<dbReference type="GO" id="GO:0000027">
    <property type="term" value="P:ribosomal large subunit assembly"/>
    <property type="evidence" value="ECO:0007669"/>
    <property type="project" value="UniProtKB-UniRule"/>
</dbReference>
<dbReference type="GO" id="GO:0006412">
    <property type="term" value="P:translation"/>
    <property type="evidence" value="ECO:0007669"/>
    <property type="project" value="InterPro"/>
</dbReference>
<dbReference type="CDD" id="cd07026">
    <property type="entry name" value="Ribosomal_L20"/>
    <property type="match status" value="1"/>
</dbReference>
<dbReference type="FunFam" id="1.10.1900.20:FF:000001">
    <property type="entry name" value="50S ribosomal protein L20"/>
    <property type="match status" value="1"/>
</dbReference>
<dbReference type="Gene3D" id="6.10.160.10">
    <property type="match status" value="1"/>
</dbReference>
<dbReference type="Gene3D" id="1.10.1900.20">
    <property type="entry name" value="Ribosomal protein L20"/>
    <property type="match status" value="1"/>
</dbReference>
<dbReference type="HAMAP" id="MF_00382">
    <property type="entry name" value="Ribosomal_bL20"/>
    <property type="match status" value="1"/>
</dbReference>
<dbReference type="InterPro" id="IPR005813">
    <property type="entry name" value="Ribosomal_bL20"/>
</dbReference>
<dbReference type="InterPro" id="IPR049946">
    <property type="entry name" value="RIBOSOMAL_L20_CS"/>
</dbReference>
<dbReference type="InterPro" id="IPR035566">
    <property type="entry name" value="Ribosomal_protein_bL20_C"/>
</dbReference>
<dbReference type="NCBIfam" id="TIGR01032">
    <property type="entry name" value="rplT_bact"/>
    <property type="match status" value="1"/>
</dbReference>
<dbReference type="PANTHER" id="PTHR10986">
    <property type="entry name" value="39S RIBOSOMAL PROTEIN L20"/>
    <property type="match status" value="1"/>
</dbReference>
<dbReference type="Pfam" id="PF00453">
    <property type="entry name" value="Ribosomal_L20"/>
    <property type="match status" value="1"/>
</dbReference>
<dbReference type="PRINTS" id="PR00062">
    <property type="entry name" value="RIBOSOMALL20"/>
</dbReference>
<dbReference type="SUPFAM" id="SSF74731">
    <property type="entry name" value="Ribosomal protein L20"/>
    <property type="match status" value="1"/>
</dbReference>
<dbReference type="PROSITE" id="PS00937">
    <property type="entry name" value="RIBOSOMAL_L20"/>
    <property type="match status" value="1"/>
</dbReference>
<proteinExistence type="inferred from homology"/>
<name>RL20_CORJK</name>
<reference key="1">
    <citation type="journal article" date="2005" name="J. Bacteriol.">
        <title>Complete genome sequence and analysis of the multiresistant nosocomial pathogen Corynebacterium jeikeium K411, a lipid-requiring bacterium of the human skin flora.</title>
        <authorList>
            <person name="Tauch A."/>
            <person name="Kaiser O."/>
            <person name="Hain T."/>
            <person name="Goesmann A."/>
            <person name="Weisshaar B."/>
            <person name="Albersmeier A."/>
            <person name="Bekel T."/>
            <person name="Bischoff N."/>
            <person name="Brune I."/>
            <person name="Chakraborty T."/>
            <person name="Kalinowski J."/>
            <person name="Meyer F."/>
            <person name="Rupp O."/>
            <person name="Schneiker S."/>
            <person name="Viehoever P."/>
            <person name="Puehler A."/>
        </authorList>
    </citation>
    <scope>NUCLEOTIDE SEQUENCE [LARGE SCALE GENOMIC DNA]</scope>
    <source>
        <strain>K411</strain>
    </source>
</reference>
<feature type="chain" id="PRO_0000243673" description="Large ribosomal subunit protein bL20">
    <location>
        <begin position="1"/>
        <end position="127"/>
    </location>
</feature>
<sequence length="127" mass="14681">MARVKRSVNAKKKRREVLKSAKGYRGQRSRLYRKAKEQMLHSKTYEFRDRKARKNEFRKLWIQRINAGARQNGMTYNRLIQGLRLAEIEVDRKNLAELAVNDFDAFTALCEAAKAALPEDVNAPAAS</sequence>
<protein>
    <recommendedName>
        <fullName evidence="1">Large ribosomal subunit protein bL20</fullName>
    </recommendedName>
    <alternativeName>
        <fullName evidence="2">50S ribosomal protein L20</fullName>
    </alternativeName>
</protein>
<keyword id="KW-1185">Reference proteome</keyword>
<keyword id="KW-0687">Ribonucleoprotein</keyword>
<keyword id="KW-0689">Ribosomal protein</keyword>
<keyword id="KW-0694">RNA-binding</keyword>
<keyword id="KW-0699">rRNA-binding</keyword>
<comment type="function">
    <text evidence="1">Binds directly to 23S ribosomal RNA and is necessary for the in vitro assembly process of the 50S ribosomal subunit. It is not involved in the protein synthesizing functions of that subunit.</text>
</comment>
<comment type="similarity">
    <text evidence="1">Belongs to the bacterial ribosomal protein bL20 family.</text>
</comment>
<evidence type="ECO:0000255" key="1">
    <source>
        <dbReference type="HAMAP-Rule" id="MF_00382"/>
    </source>
</evidence>
<evidence type="ECO:0000305" key="2"/>
<gene>
    <name evidence="1" type="primary">rplT</name>
    <name type="ordered locus">jk0836</name>
</gene>